<gene>
    <name evidence="1" type="primary">ilvC</name>
    <name type="ordered locus">M1425_1555</name>
</gene>
<evidence type="ECO:0000255" key="1">
    <source>
        <dbReference type="HAMAP-Rule" id="MF_00435"/>
    </source>
</evidence>
<evidence type="ECO:0000255" key="2">
    <source>
        <dbReference type="PROSITE-ProRule" id="PRU01197"/>
    </source>
</evidence>
<evidence type="ECO:0000255" key="3">
    <source>
        <dbReference type="PROSITE-ProRule" id="PRU01198"/>
    </source>
</evidence>
<keyword id="KW-0028">Amino-acid biosynthesis</keyword>
<keyword id="KW-0100">Branched-chain amino acid biosynthesis</keyword>
<keyword id="KW-0460">Magnesium</keyword>
<keyword id="KW-0479">Metal-binding</keyword>
<keyword id="KW-0521">NADP</keyword>
<keyword id="KW-0560">Oxidoreductase</keyword>
<feature type="chain" id="PRO_1000206091" description="Ketol-acid reductoisomerase (NADP(+))">
    <location>
        <begin position="1"/>
        <end position="335"/>
    </location>
</feature>
<feature type="domain" description="KARI N-terminal Rossmann" evidence="2">
    <location>
        <begin position="5"/>
        <end position="185"/>
    </location>
</feature>
<feature type="domain" description="KARI C-terminal knotted" evidence="3">
    <location>
        <begin position="186"/>
        <end position="331"/>
    </location>
</feature>
<feature type="active site" evidence="1">
    <location>
        <position position="111"/>
    </location>
</feature>
<feature type="binding site" evidence="1">
    <location>
        <begin position="28"/>
        <end position="31"/>
    </location>
    <ligand>
        <name>NADP(+)</name>
        <dbReference type="ChEBI" id="CHEBI:58349"/>
    </ligand>
</feature>
<feature type="binding site" evidence="1">
    <location>
        <position position="56"/>
    </location>
    <ligand>
        <name>NADP(+)</name>
        <dbReference type="ChEBI" id="CHEBI:58349"/>
    </ligand>
</feature>
<feature type="binding site" evidence="1">
    <location>
        <begin position="86"/>
        <end position="89"/>
    </location>
    <ligand>
        <name>NADP(+)</name>
        <dbReference type="ChEBI" id="CHEBI:58349"/>
    </ligand>
</feature>
<feature type="binding site" evidence="1">
    <location>
        <position position="137"/>
    </location>
    <ligand>
        <name>NADP(+)</name>
        <dbReference type="ChEBI" id="CHEBI:58349"/>
    </ligand>
</feature>
<feature type="binding site" evidence="1">
    <location>
        <position position="194"/>
    </location>
    <ligand>
        <name>Mg(2+)</name>
        <dbReference type="ChEBI" id="CHEBI:18420"/>
        <label>1</label>
    </ligand>
</feature>
<feature type="binding site" evidence="1">
    <location>
        <position position="194"/>
    </location>
    <ligand>
        <name>Mg(2+)</name>
        <dbReference type="ChEBI" id="CHEBI:18420"/>
        <label>2</label>
    </ligand>
</feature>
<feature type="binding site" evidence="1">
    <location>
        <position position="198"/>
    </location>
    <ligand>
        <name>Mg(2+)</name>
        <dbReference type="ChEBI" id="CHEBI:18420"/>
        <label>1</label>
    </ligand>
</feature>
<feature type="binding site" evidence="1">
    <location>
        <position position="230"/>
    </location>
    <ligand>
        <name>Mg(2+)</name>
        <dbReference type="ChEBI" id="CHEBI:18420"/>
        <label>2</label>
    </ligand>
</feature>
<feature type="binding site" evidence="1">
    <location>
        <position position="234"/>
    </location>
    <ligand>
        <name>Mg(2+)</name>
        <dbReference type="ChEBI" id="CHEBI:18420"/>
        <label>2</label>
    </ligand>
</feature>
<feature type="binding site" evidence="1">
    <location>
        <position position="255"/>
    </location>
    <ligand>
        <name>substrate</name>
    </ligand>
</feature>
<accession>C3MW82</accession>
<organism>
    <name type="scientific">Saccharolobus islandicus (strain M.14.25 / Kamchatka #1)</name>
    <name type="common">Sulfolobus islandicus</name>
    <dbReference type="NCBI Taxonomy" id="427317"/>
    <lineage>
        <taxon>Archaea</taxon>
        <taxon>Thermoproteota</taxon>
        <taxon>Thermoprotei</taxon>
        <taxon>Sulfolobales</taxon>
        <taxon>Sulfolobaceae</taxon>
        <taxon>Saccharolobus</taxon>
    </lineage>
</organism>
<name>ILVC_SACI4</name>
<comment type="function">
    <text evidence="1">Involved in the biosynthesis of branched-chain amino acids (BCAA). Catalyzes an alkyl-migration followed by a ketol-acid reduction of (S)-2-acetolactate (S2AL) to yield (R)-2,3-dihydroxy-isovalerate. In the isomerase reaction, S2AL is rearranged via a Mg-dependent methyl migration to produce 3-hydroxy-3-methyl-2-ketobutyrate (HMKB). In the reductase reaction, this 2-ketoacid undergoes a metal-dependent reduction by NADPH to yield (R)-2,3-dihydroxy-isovalerate.</text>
</comment>
<comment type="catalytic activity">
    <reaction evidence="1">
        <text>(2R)-2,3-dihydroxy-3-methylbutanoate + NADP(+) = (2S)-2-acetolactate + NADPH + H(+)</text>
        <dbReference type="Rhea" id="RHEA:22068"/>
        <dbReference type="ChEBI" id="CHEBI:15378"/>
        <dbReference type="ChEBI" id="CHEBI:49072"/>
        <dbReference type="ChEBI" id="CHEBI:57783"/>
        <dbReference type="ChEBI" id="CHEBI:58349"/>
        <dbReference type="ChEBI" id="CHEBI:58476"/>
        <dbReference type="EC" id="1.1.1.86"/>
    </reaction>
</comment>
<comment type="catalytic activity">
    <reaction evidence="1">
        <text>(2R,3R)-2,3-dihydroxy-3-methylpentanoate + NADP(+) = (S)-2-ethyl-2-hydroxy-3-oxobutanoate + NADPH + H(+)</text>
        <dbReference type="Rhea" id="RHEA:13493"/>
        <dbReference type="ChEBI" id="CHEBI:15378"/>
        <dbReference type="ChEBI" id="CHEBI:49256"/>
        <dbReference type="ChEBI" id="CHEBI:49258"/>
        <dbReference type="ChEBI" id="CHEBI:57783"/>
        <dbReference type="ChEBI" id="CHEBI:58349"/>
        <dbReference type="EC" id="1.1.1.86"/>
    </reaction>
</comment>
<comment type="cofactor">
    <cofactor evidence="1">
        <name>Mg(2+)</name>
        <dbReference type="ChEBI" id="CHEBI:18420"/>
    </cofactor>
    <text evidence="1">Binds 2 magnesium ions per subunit.</text>
</comment>
<comment type="pathway">
    <text evidence="1">Amino-acid biosynthesis; L-isoleucine biosynthesis; L-isoleucine from 2-oxobutanoate: step 2/4.</text>
</comment>
<comment type="pathway">
    <text evidence="1">Amino-acid biosynthesis; L-valine biosynthesis; L-valine from pyruvate: step 2/4.</text>
</comment>
<comment type="similarity">
    <text evidence="1">Belongs to the ketol-acid reductoisomerase family.</text>
</comment>
<protein>
    <recommendedName>
        <fullName evidence="1">Ketol-acid reductoisomerase (NADP(+))</fullName>
        <shortName evidence="1">KARI</shortName>
        <ecNumber evidence="1">1.1.1.86</ecNumber>
    </recommendedName>
    <alternativeName>
        <fullName evidence="1">Acetohydroxy-acid isomeroreductase</fullName>
        <shortName evidence="1">AHIR</shortName>
    </alternativeName>
    <alternativeName>
        <fullName evidence="1">Alpha-keto-beta-hydroxylacyl reductoisomerase</fullName>
    </alternativeName>
    <alternativeName>
        <fullName evidence="1">Ketol-acid reductoisomerase type 1</fullName>
    </alternativeName>
    <alternativeName>
        <fullName evidence="1">Ketol-acid reductoisomerase type I</fullName>
    </alternativeName>
</protein>
<sequence>MKSTSKIYTDKDSNLDVIKGKRIAVLGYGSQGRAWAQNLRDSGLNVVVGLEREGKSWELAKSDGIIPLHTKDAVKDADIIIFLVPDMVQRTLWLESVQPYMKKGADLVFAHGFNIHYKLIEPPKDSDVYMIAPKGPGPTVREYYKAGGGVPALVAIQQDVSGTALQKALAIAKGIGATRAGVIPTTFKEETETDLFGEQVILVGGIMELMKAAFETLVEEGYQPEVAYFETINELKMLVDLVYEKGITGMLKAVSDTAKYGGMTVGKFVINEDVRKRMKEALQRIKSGKFAEEWVEEYGRGMPTVVNGLSQVQNSLEEKIGNQLKDLIQKGKPKS</sequence>
<dbReference type="EC" id="1.1.1.86" evidence="1"/>
<dbReference type="EMBL" id="CP001400">
    <property type="protein sequence ID" value="ACP38304.1"/>
    <property type="molecule type" value="Genomic_DNA"/>
</dbReference>
<dbReference type="RefSeq" id="WP_012711549.1">
    <property type="nucleotide sequence ID" value="NC_012588.1"/>
</dbReference>
<dbReference type="SMR" id="C3MW82"/>
<dbReference type="GeneID" id="84061866"/>
<dbReference type="KEGG" id="sia:M1425_1555"/>
<dbReference type="HOGENOM" id="CLU_033821_0_1_2"/>
<dbReference type="UniPathway" id="UPA00047">
    <property type="reaction ID" value="UER00056"/>
</dbReference>
<dbReference type="UniPathway" id="UPA00049">
    <property type="reaction ID" value="UER00060"/>
</dbReference>
<dbReference type="Proteomes" id="UP000001350">
    <property type="component" value="Chromosome"/>
</dbReference>
<dbReference type="GO" id="GO:0004455">
    <property type="term" value="F:ketol-acid reductoisomerase activity"/>
    <property type="evidence" value="ECO:0007669"/>
    <property type="project" value="UniProtKB-UniRule"/>
</dbReference>
<dbReference type="GO" id="GO:0000287">
    <property type="term" value="F:magnesium ion binding"/>
    <property type="evidence" value="ECO:0007669"/>
    <property type="project" value="UniProtKB-UniRule"/>
</dbReference>
<dbReference type="GO" id="GO:0050661">
    <property type="term" value="F:NADP binding"/>
    <property type="evidence" value="ECO:0007669"/>
    <property type="project" value="InterPro"/>
</dbReference>
<dbReference type="GO" id="GO:0009097">
    <property type="term" value="P:isoleucine biosynthetic process"/>
    <property type="evidence" value="ECO:0007669"/>
    <property type="project" value="UniProtKB-UniRule"/>
</dbReference>
<dbReference type="GO" id="GO:0009099">
    <property type="term" value="P:L-valine biosynthetic process"/>
    <property type="evidence" value="ECO:0007669"/>
    <property type="project" value="UniProtKB-UniRule"/>
</dbReference>
<dbReference type="FunFam" id="3.40.50.720:FF:000023">
    <property type="entry name" value="Ketol-acid reductoisomerase (NADP(+))"/>
    <property type="match status" value="1"/>
</dbReference>
<dbReference type="Gene3D" id="6.10.240.10">
    <property type="match status" value="1"/>
</dbReference>
<dbReference type="Gene3D" id="3.40.50.720">
    <property type="entry name" value="NAD(P)-binding Rossmann-like Domain"/>
    <property type="match status" value="1"/>
</dbReference>
<dbReference type="HAMAP" id="MF_00435">
    <property type="entry name" value="IlvC"/>
    <property type="match status" value="1"/>
</dbReference>
<dbReference type="InterPro" id="IPR008927">
    <property type="entry name" value="6-PGluconate_DH-like_C_sf"/>
</dbReference>
<dbReference type="InterPro" id="IPR013023">
    <property type="entry name" value="KARI"/>
</dbReference>
<dbReference type="InterPro" id="IPR000506">
    <property type="entry name" value="KARI_C"/>
</dbReference>
<dbReference type="InterPro" id="IPR013116">
    <property type="entry name" value="KARI_N"/>
</dbReference>
<dbReference type="InterPro" id="IPR014359">
    <property type="entry name" value="KARI_prok"/>
</dbReference>
<dbReference type="InterPro" id="IPR036291">
    <property type="entry name" value="NAD(P)-bd_dom_sf"/>
</dbReference>
<dbReference type="NCBIfam" id="TIGR00465">
    <property type="entry name" value="ilvC"/>
    <property type="match status" value="1"/>
</dbReference>
<dbReference type="NCBIfam" id="NF004017">
    <property type="entry name" value="PRK05479.1"/>
    <property type="match status" value="1"/>
</dbReference>
<dbReference type="PANTHER" id="PTHR21371">
    <property type="entry name" value="KETOL-ACID REDUCTOISOMERASE, MITOCHONDRIAL"/>
    <property type="match status" value="1"/>
</dbReference>
<dbReference type="PANTHER" id="PTHR21371:SF1">
    <property type="entry name" value="KETOL-ACID REDUCTOISOMERASE, MITOCHONDRIAL"/>
    <property type="match status" value="1"/>
</dbReference>
<dbReference type="Pfam" id="PF01450">
    <property type="entry name" value="KARI_C"/>
    <property type="match status" value="1"/>
</dbReference>
<dbReference type="Pfam" id="PF07991">
    <property type="entry name" value="KARI_N"/>
    <property type="match status" value="1"/>
</dbReference>
<dbReference type="PIRSF" id="PIRSF000116">
    <property type="entry name" value="IlvC_gammaproteo"/>
    <property type="match status" value="1"/>
</dbReference>
<dbReference type="SUPFAM" id="SSF48179">
    <property type="entry name" value="6-phosphogluconate dehydrogenase C-terminal domain-like"/>
    <property type="match status" value="1"/>
</dbReference>
<dbReference type="SUPFAM" id="SSF51735">
    <property type="entry name" value="NAD(P)-binding Rossmann-fold domains"/>
    <property type="match status" value="1"/>
</dbReference>
<dbReference type="PROSITE" id="PS51851">
    <property type="entry name" value="KARI_C"/>
    <property type="match status" value="1"/>
</dbReference>
<dbReference type="PROSITE" id="PS51850">
    <property type="entry name" value="KARI_N"/>
    <property type="match status" value="1"/>
</dbReference>
<reference key="1">
    <citation type="journal article" date="2009" name="Proc. Natl. Acad. Sci. U.S.A.">
        <title>Biogeography of the Sulfolobus islandicus pan-genome.</title>
        <authorList>
            <person name="Reno M.L."/>
            <person name="Held N.L."/>
            <person name="Fields C.J."/>
            <person name="Burke P.V."/>
            <person name="Whitaker R.J."/>
        </authorList>
    </citation>
    <scope>NUCLEOTIDE SEQUENCE [LARGE SCALE GENOMIC DNA]</scope>
    <source>
        <strain>M.14.25 / Kamchatka #1</strain>
    </source>
</reference>
<proteinExistence type="inferred from homology"/>